<accession>Q9F722</accession>
<feature type="initiator methionine" description="Removed" evidence="1">
    <location>
        <position position="1"/>
    </location>
</feature>
<feature type="chain" id="PRO_0000127773" description="Cytochrome b6-f complex iron-sulfur subunit">
    <location>
        <begin position="2"/>
        <end position="181"/>
    </location>
</feature>
<feature type="transmembrane region" description="Helical" evidence="2">
    <location>
        <begin position="53"/>
        <end position="73"/>
    </location>
</feature>
<feature type="transmembrane region" description="Helical" evidence="2">
    <location>
        <begin position="114"/>
        <end position="134"/>
    </location>
</feature>
<feature type="domain" description="Rieske" evidence="3">
    <location>
        <begin position="85"/>
        <end position="178"/>
    </location>
</feature>
<feature type="region of interest" description="Disordered" evidence="4">
    <location>
        <begin position="1"/>
        <end position="35"/>
    </location>
</feature>
<feature type="binding site" evidence="3">
    <location>
        <position position="124"/>
    </location>
    <ligand>
        <name>[2Fe-2S] cluster</name>
        <dbReference type="ChEBI" id="CHEBI:190135"/>
    </ligand>
</feature>
<feature type="binding site" evidence="3">
    <location>
        <position position="126"/>
    </location>
    <ligand>
        <name>[2Fe-2S] cluster</name>
        <dbReference type="ChEBI" id="CHEBI:190135"/>
    </ligand>
</feature>
<feature type="binding site" evidence="3">
    <location>
        <position position="142"/>
    </location>
    <ligand>
        <name>[2Fe-2S] cluster</name>
        <dbReference type="ChEBI" id="CHEBI:190135"/>
    </ligand>
</feature>
<feature type="binding site" evidence="3">
    <location>
        <position position="145"/>
    </location>
    <ligand>
        <name>[2Fe-2S] cluster</name>
        <dbReference type="ChEBI" id="CHEBI:190135"/>
    </ligand>
</feature>
<feature type="disulfide bond" evidence="3">
    <location>
        <begin position="129"/>
        <end position="144"/>
    </location>
</feature>
<feature type="sequence conflict" description="In Ref. 1; AAG12194." evidence="5" ref="1">
    <original>V</original>
    <variation>F</variation>
    <location>
        <position position="68"/>
    </location>
</feature>
<feature type="sequence conflict" description="In Ref. 1; AAG12194." evidence="5" ref="1">
    <original>T</original>
    <variation>R</variation>
    <location>
        <position position="150"/>
    </location>
</feature>
<feature type="strand" evidence="6">
    <location>
        <begin position="78"/>
        <end position="89"/>
    </location>
</feature>
<feature type="helix" evidence="6">
    <location>
        <begin position="90"/>
        <end position="92"/>
    </location>
</feature>
<feature type="strand" evidence="6">
    <location>
        <begin position="97"/>
        <end position="103"/>
    </location>
</feature>
<feature type="strand" evidence="6">
    <location>
        <begin position="106"/>
        <end position="113"/>
    </location>
</feature>
<feature type="strand" evidence="6">
    <location>
        <begin position="116"/>
        <end position="121"/>
    </location>
</feature>
<feature type="strand" evidence="6">
    <location>
        <begin position="125"/>
        <end position="127"/>
    </location>
</feature>
<feature type="strand" evidence="6">
    <location>
        <begin position="132"/>
        <end position="134"/>
    </location>
</feature>
<feature type="turn" evidence="6">
    <location>
        <begin position="135"/>
        <end position="138"/>
    </location>
</feature>
<feature type="strand" evidence="6">
    <location>
        <begin position="139"/>
        <end position="141"/>
    </location>
</feature>
<feature type="turn" evidence="6">
    <location>
        <begin position="143"/>
        <end position="145"/>
    </location>
</feature>
<feature type="strand" evidence="6">
    <location>
        <begin position="155"/>
        <end position="159"/>
    </location>
</feature>
<feature type="strand" evidence="6">
    <location>
        <begin position="166"/>
        <end position="172"/>
    </location>
</feature>
<feature type="strand" evidence="6">
    <location>
        <begin position="175"/>
        <end position="181"/>
    </location>
</feature>
<keyword id="KW-0001">2Fe-2S</keyword>
<keyword id="KW-0002">3D-structure</keyword>
<keyword id="KW-0997">Cell inner membrane</keyword>
<keyword id="KW-1003">Cell membrane</keyword>
<keyword id="KW-1015">Disulfide bond</keyword>
<keyword id="KW-0249">Electron transport</keyword>
<keyword id="KW-0408">Iron</keyword>
<keyword id="KW-0411">Iron-sulfur</keyword>
<keyword id="KW-0472">Membrane</keyword>
<keyword id="KW-0479">Metal-binding</keyword>
<keyword id="KW-1185">Reference proteome</keyword>
<keyword id="KW-1278">Translocase</keyword>
<keyword id="KW-0812">Transmembrane</keyword>
<keyword id="KW-1133">Transmembrane helix</keyword>
<keyword id="KW-0813">Transport</keyword>
<reference key="1">
    <citation type="journal article" date="2000" name="Science">
        <title>Molecular evidence for the early evolution of photosynthesis.</title>
        <authorList>
            <person name="Xiong J."/>
            <person name="Fischer W.M."/>
            <person name="Inoue K."/>
            <person name="Nakahara M."/>
            <person name="Bauer C.E."/>
        </authorList>
    </citation>
    <scope>NUCLEOTIDE SEQUENCE [GENOMIC DNA]</scope>
    <source>
        <strain>ATCC 49652 / DSM 12025 / NBRC 103806 / TLS</strain>
    </source>
</reference>
<reference key="2">
    <citation type="journal article" date="2002" name="Proc. Natl. Acad. Sci. U.S.A.">
        <title>The complete genome sequence of Chlorobium tepidum TLS, a photosynthetic, anaerobic, green-sulfur bacterium.</title>
        <authorList>
            <person name="Eisen J.A."/>
            <person name="Nelson K.E."/>
            <person name="Paulsen I.T."/>
            <person name="Heidelberg J.F."/>
            <person name="Wu M."/>
            <person name="Dodson R.J."/>
            <person name="DeBoy R.T."/>
            <person name="Gwinn M.L."/>
            <person name="Nelson W.C."/>
            <person name="Haft D.H."/>
            <person name="Hickey E.K."/>
            <person name="Peterson J.D."/>
            <person name="Durkin A.S."/>
            <person name="Kolonay J.F."/>
            <person name="Yang F."/>
            <person name="Holt I.E."/>
            <person name="Umayam L.A."/>
            <person name="Mason T.M."/>
            <person name="Brenner M."/>
            <person name="Shea T.P."/>
            <person name="Parksey D.S."/>
            <person name="Nierman W.C."/>
            <person name="Feldblyum T.V."/>
            <person name="Hansen C.L."/>
            <person name="Craven M.B."/>
            <person name="Radune D."/>
            <person name="Vamathevan J.J."/>
            <person name="Khouri H.M."/>
            <person name="White O."/>
            <person name="Gruber T.M."/>
            <person name="Ketchum K.A."/>
            <person name="Venter J.C."/>
            <person name="Tettelin H."/>
            <person name="Bryant D.A."/>
            <person name="Fraser C.M."/>
        </authorList>
    </citation>
    <scope>NUCLEOTIDE SEQUENCE [LARGE SCALE GENOMIC DNA]</scope>
    <source>
        <strain>ATCC 49652 / DSM 12025 / NBRC 103806 / TLS</strain>
    </source>
</reference>
<sequence length="181" mass="18864">MAQTGNFKSPARMSSLGQGAAPASAGAVTGGKPREEGLKGVDFERRGFLQKIVGGVGAVVAVSTLYPVVRYIVPPAKKIKIVNELAVGPASDVPNGTGKIYQFNDDKVIVVNHGGSLTAVSAICTHLGCLVHWDEAADMIACPCHGAKYTQDGKIISGPQPLPLKQYKVKIEDGKIVVSIA</sequence>
<protein>
    <recommendedName>
        <fullName>Cytochrome b6-f complex iron-sulfur subunit</fullName>
        <ecNumber>7.1.1.6</ecNumber>
    </recommendedName>
    <alternativeName>
        <fullName>Plastohydroquinone:plastocyanin oxidoreductase iron-sulfur protein</fullName>
    </alternativeName>
    <alternativeName>
        <fullName>Rieske iron-sulfur protein</fullName>
        <shortName>ISP</shortName>
        <shortName>RISP</shortName>
    </alternativeName>
</protein>
<dbReference type="EC" id="7.1.1.6"/>
<dbReference type="EMBL" id="AF287480">
    <property type="protein sequence ID" value="AAG12194.1"/>
    <property type="molecule type" value="Genomic_DNA"/>
</dbReference>
<dbReference type="EMBL" id="AE006470">
    <property type="protein sequence ID" value="AAM71548.1"/>
    <property type="molecule type" value="Genomic_DNA"/>
</dbReference>
<dbReference type="RefSeq" id="NP_661206.1">
    <property type="nucleotide sequence ID" value="NC_002932.3"/>
</dbReference>
<dbReference type="RefSeq" id="WP_010931994.1">
    <property type="nucleotide sequence ID" value="NC_002932.3"/>
</dbReference>
<dbReference type="PDB" id="8HN2">
    <property type="method" value="X-ray"/>
    <property type="resolution" value="2.30 A"/>
    <property type="chains" value="A/B=77-181"/>
</dbReference>
<dbReference type="PDBsum" id="8HN2"/>
<dbReference type="SMR" id="Q9F722"/>
<dbReference type="STRING" id="194439.CT0302"/>
<dbReference type="EnsemblBacteria" id="AAM71548">
    <property type="protein sequence ID" value="AAM71548"/>
    <property type="gene ID" value="CT0302"/>
</dbReference>
<dbReference type="KEGG" id="cte:CT0302"/>
<dbReference type="PATRIC" id="fig|194439.7.peg.292"/>
<dbReference type="eggNOG" id="COG0723">
    <property type="taxonomic scope" value="Bacteria"/>
</dbReference>
<dbReference type="HOGENOM" id="CLU_055690_1_1_10"/>
<dbReference type="OrthoDB" id="9767869at2"/>
<dbReference type="Proteomes" id="UP000001007">
    <property type="component" value="Chromosome"/>
</dbReference>
<dbReference type="GO" id="GO:0005886">
    <property type="term" value="C:plasma membrane"/>
    <property type="evidence" value="ECO:0007669"/>
    <property type="project" value="UniProtKB-SubCell"/>
</dbReference>
<dbReference type="GO" id="GO:0051537">
    <property type="term" value="F:2 iron, 2 sulfur cluster binding"/>
    <property type="evidence" value="ECO:0007669"/>
    <property type="project" value="UniProtKB-KW"/>
</dbReference>
<dbReference type="GO" id="GO:0046872">
    <property type="term" value="F:metal ion binding"/>
    <property type="evidence" value="ECO:0007669"/>
    <property type="project" value="UniProtKB-KW"/>
</dbReference>
<dbReference type="GO" id="GO:0009496">
    <property type="term" value="F:plastoquinol--plastocyanin reductase activity"/>
    <property type="evidence" value="ECO:0007669"/>
    <property type="project" value="UniProtKB-EC"/>
</dbReference>
<dbReference type="CDD" id="cd03467">
    <property type="entry name" value="Rieske"/>
    <property type="match status" value="1"/>
</dbReference>
<dbReference type="Gene3D" id="2.102.10.10">
    <property type="entry name" value="Rieske [2Fe-2S] iron-sulphur domain"/>
    <property type="match status" value="1"/>
</dbReference>
<dbReference type="Gene3D" id="1.20.5.700">
    <property type="entry name" value="Single helix bin"/>
    <property type="match status" value="1"/>
</dbReference>
<dbReference type="InterPro" id="IPR017941">
    <property type="entry name" value="Rieske_2Fe-2S"/>
</dbReference>
<dbReference type="InterPro" id="IPR036922">
    <property type="entry name" value="Rieske_2Fe-2S_sf"/>
</dbReference>
<dbReference type="InterPro" id="IPR014349">
    <property type="entry name" value="Rieske_Fe-S_prot"/>
</dbReference>
<dbReference type="InterPro" id="IPR005805">
    <property type="entry name" value="Rieske_Fe-S_prot_C"/>
</dbReference>
<dbReference type="PANTHER" id="PTHR10134">
    <property type="entry name" value="CYTOCHROME B-C1 COMPLEX SUBUNIT RIESKE, MITOCHONDRIAL"/>
    <property type="match status" value="1"/>
</dbReference>
<dbReference type="Pfam" id="PF00355">
    <property type="entry name" value="Rieske"/>
    <property type="match status" value="1"/>
</dbReference>
<dbReference type="PRINTS" id="PR00162">
    <property type="entry name" value="RIESKE"/>
</dbReference>
<dbReference type="SUPFAM" id="SSF50022">
    <property type="entry name" value="ISP domain"/>
    <property type="match status" value="1"/>
</dbReference>
<dbReference type="PROSITE" id="PS51296">
    <property type="entry name" value="RIESKE"/>
    <property type="match status" value="1"/>
</dbReference>
<organism>
    <name type="scientific">Chlorobaculum tepidum (strain ATCC 49652 / DSM 12025 / NBRC 103806 / TLS)</name>
    <name type="common">Chlorobium tepidum</name>
    <dbReference type="NCBI Taxonomy" id="194439"/>
    <lineage>
        <taxon>Bacteria</taxon>
        <taxon>Pseudomonadati</taxon>
        <taxon>Chlorobiota</taxon>
        <taxon>Chlorobiia</taxon>
        <taxon>Chlorobiales</taxon>
        <taxon>Chlorobiaceae</taxon>
        <taxon>Chlorobaculum</taxon>
    </lineage>
</organism>
<proteinExistence type="evidence at protein level"/>
<evidence type="ECO:0000250" key="1"/>
<evidence type="ECO:0000255" key="2"/>
<evidence type="ECO:0000255" key="3">
    <source>
        <dbReference type="PROSITE-ProRule" id="PRU00628"/>
    </source>
</evidence>
<evidence type="ECO:0000256" key="4">
    <source>
        <dbReference type="SAM" id="MobiDB-lite"/>
    </source>
</evidence>
<evidence type="ECO:0000305" key="5"/>
<evidence type="ECO:0007829" key="6">
    <source>
        <dbReference type="PDB" id="8HN2"/>
    </source>
</evidence>
<comment type="function">
    <text>Component of the green S-bacteria bc-complex which consists of the Rieske protein and cytochrome b subunit and which appears to lack a cytochrome c1-equivalent. This complex has a comparatively low redox potential.</text>
</comment>
<comment type="catalytic activity">
    <reaction>
        <text>2 oxidized [plastocyanin] + a plastoquinol + 2 H(+)(in) = 2 reduced [plastocyanin] + a plastoquinone + 4 H(+)(out)</text>
        <dbReference type="Rhea" id="RHEA:22148"/>
        <dbReference type="Rhea" id="RHEA-COMP:9561"/>
        <dbReference type="Rhea" id="RHEA-COMP:9562"/>
        <dbReference type="Rhea" id="RHEA-COMP:10039"/>
        <dbReference type="Rhea" id="RHEA-COMP:10040"/>
        <dbReference type="ChEBI" id="CHEBI:15378"/>
        <dbReference type="ChEBI" id="CHEBI:17757"/>
        <dbReference type="ChEBI" id="CHEBI:29036"/>
        <dbReference type="ChEBI" id="CHEBI:49552"/>
        <dbReference type="ChEBI" id="CHEBI:62192"/>
        <dbReference type="EC" id="7.1.1.6"/>
    </reaction>
</comment>
<comment type="cofactor">
    <cofactor evidence="3">
        <name>[2Fe-2S] cluster</name>
        <dbReference type="ChEBI" id="CHEBI:190135"/>
    </cofactor>
    <text evidence="3">Binds 1 [2Fe-2S] cluster per subunit.</text>
</comment>
<comment type="subcellular location">
    <subcellularLocation>
        <location evidence="5">Cell inner membrane</location>
        <topology evidence="5">Multi-pass membrane protein</topology>
    </subcellularLocation>
</comment>
<comment type="miscellaneous">
    <text>The Rieske protein is a high potential 2Fe-2S protein.</text>
</comment>
<comment type="similarity">
    <text evidence="5">Belongs to the Rieske iron-sulfur protein family.</text>
</comment>
<gene>
    <name type="primary">petC</name>
    <name type="ordered locus">CT0302</name>
</gene>
<name>UCRI_CHLTE</name>